<keyword id="KW-1185">Reference proteome</keyword>
<sequence>MEILKNHIVSDKLRSSNKCTLLTLNSKFNVIISLEKSPLDKIRELFKSILVDGFTDHNHYKLTAYFAEIVDTDTVINVIIDTVQSKLDSIREALDTNEINLSMYIQIWESYHDFFKNMHLIIKNYQNYLMNKNVTVGKLSLSILSIIEIGMFYNSVIKNNPNDILSSLSKHIYSIDKNNIDQLINYIDSIRSFTLVSGVIDIDKIKLFKIIKNIINSPEIINTLCAYLDTLIRSVSFEKFTKNTEYKTVSIDSIKNQTIRKIYKITIILAAYSDRNVLNLCYSYILTSSCN</sequence>
<proteinExistence type="predicted"/>
<accession>Q5UQT1</accession>
<organism>
    <name type="scientific">Acanthamoeba polyphaga mimivirus</name>
    <name type="common">APMV</name>
    <dbReference type="NCBI Taxonomy" id="212035"/>
    <lineage>
        <taxon>Viruses</taxon>
        <taxon>Varidnaviria</taxon>
        <taxon>Bamfordvirae</taxon>
        <taxon>Nucleocytoviricota</taxon>
        <taxon>Megaviricetes</taxon>
        <taxon>Imitervirales</taxon>
        <taxon>Mimiviridae</taxon>
        <taxon>Megamimivirinae</taxon>
        <taxon>Mimivirus</taxon>
        <taxon>Mimivirus bradfordmassiliense</taxon>
    </lineage>
</organism>
<dbReference type="EMBL" id="AY653733">
    <property type="protein sequence ID" value="AAV50605.1"/>
    <property type="molecule type" value="Genomic_DNA"/>
</dbReference>
<dbReference type="Proteomes" id="UP000001134">
    <property type="component" value="Genome"/>
</dbReference>
<gene>
    <name type="ordered locus">MIMI_R336</name>
</gene>
<organismHost>
    <name type="scientific">Acanthamoeba polyphaga</name>
    <name type="common">Amoeba</name>
    <dbReference type="NCBI Taxonomy" id="5757"/>
</organismHost>
<feature type="chain" id="PRO_0000241700" description="Uncharacterized protein R336">
    <location>
        <begin position="1"/>
        <end position="291"/>
    </location>
</feature>
<name>YR336_MIMIV</name>
<protein>
    <recommendedName>
        <fullName>Uncharacterized protein R336</fullName>
    </recommendedName>
</protein>
<reference key="1">
    <citation type="journal article" date="2004" name="Science">
        <title>The 1.2-megabase genome sequence of Mimivirus.</title>
        <authorList>
            <person name="Raoult D."/>
            <person name="Audic S."/>
            <person name="Robert C."/>
            <person name="Abergel C."/>
            <person name="Renesto P."/>
            <person name="Ogata H."/>
            <person name="La Scola B."/>
            <person name="Susan M."/>
            <person name="Claverie J.-M."/>
        </authorList>
    </citation>
    <scope>NUCLEOTIDE SEQUENCE [LARGE SCALE GENOMIC DNA]</scope>
    <source>
        <strain>Rowbotham-Bradford</strain>
    </source>
</reference>